<proteinExistence type="evidence at protein level"/>
<organism>
    <name type="scientific">Rattus norvegicus</name>
    <name type="common">Rat</name>
    <dbReference type="NCBI Taxonomy" id="10116"/>
    <lineage>
        <taxon>Eukaryota</taxon>
        <taxon>Metazoa</taxon>
        <taxon>Chordata</taxon>
        <taxon>Craniata</taxon>
        <taxon>Vertebrata</taxon>
        <taxon>Euteleostomi</taxon>
        <taxon>Mammalia</taxon>
        <taxon>Eutheria</taxon>
        <taxon>Euarchontoglires</taxon>
        <taxon>Glires</taxon>
        <taxon>Rodentia</taxon>
        <taxon>Myomorpha</taxon>
        <taxon>Muroidea</taxon>
        <taxon>Muridae</taxon>
        <taxon>Murinae</taxon>
        <taxon>Rattus</taxon>
    </lineage>
</organism>
<name>CAZA1_RAT</name>
<accession>B2GUZ5</accession>
<evidence type="ECO:0000250" key="1">
    <source>
        <dbReference type="UniProtKB" id="A0PFK5"/>
    </source>
</evidence>
<evidence type="ECO:0000250" key="2">
    <source>
        <dbReference type="UniProtKB" id="P52907"/>
    </source>
</evidence>
<evidence type="ECO:0000255" key="3"/>
<evidence type="ECO:0000269" key="4">
    <source>
    </source>
</evidence>
<evidence type="ECO:0000269" key="5">
    <source>
    </source>
</evidence>
<evidence type="ECO:0000312" key="6">
    <source>
        <dbReference type="EMBL" id="AAI66464.1"/>
    </source>
</evidence>
<evidence type="ECO:0007744" key="7">
    <source>
    </source>
</evidence>
<dbReference type="EMBL" id="BC166464">
    <property type="protein sequence ID" value="AAI66464.1"/>
    <property type="molecule type" value="mRNA"/>
</dbReference>
<dbReference type="RefSeq" id="NP_001103095.2">
    <property type="nucleotide sequence ID" value="NM_001109625.2"/>
</dbReference>
<dbReference type="BMRB" id="B2GUZ5"/>
<dbReference type="SMR" id="B2GUZ5"/>
<dbReference type="BioGRID" id="605958">
    <property type="interactions" value="8"/>
</dbReference>
<dbReference type="FunCoup" id="B2GUZ5">
    <property type="interactions" value="3967"/>
</dbReference>
<dbReference type="IntAct" id="B2GUZ5">
    <property type="interactions" value="2"/>
</dbReference>
<dbReference type="MINT" id="B2GUZ5"/>
<dbReference type="STRING" id="10116.ENSRNOP00000052868"/>
<dbReference type="iPTMnet" id="B2GUZ5"/>
<dbReference type="PhosphoSitePlus" id="B2GUZ5"/>
<dbReference type="jPOST" id="B2GUZ5"/>
<dbReference type="PaxDb" id="10116-ENSRNOP00000052868"/>
<dbReference type="PeptideAtlas" id="B2GUZ5"/>
<dbReference type="Ensembl" id="ENSRNOT00000108033.1">
    <property type="protein sequence ID" value="ENSRNOP00000085539.1"/>
    <property type="gene ID" value="ENSRNOG00000013538.8"/>
</dbReference>
<dbReference type="GeneID" id="691149"/>
<dbReference type="KEGG" id="rno:691149"/>
<dbReference type="UCSC" id="RGD:1587438">
    <property type="organism name" value="rat"/>
</dbReference>
<dbReference type="AGR" id="RGD:1587438"/>
<dbReference type="CTD" id="829"/>
<dbReference type="RGD" id="1587438">
    <property type="gene designation" value="Capza1"/>
</dbReference>
<dbReference type="eggNOG" id="KOG0836">
    <property type="taxonomic scope" value="Eukaryota"/>
</dbReference>
<dbReference type="GeneTree" id="ENSGT00950000183119"/>
<dbReference type="HOGENOM" id="CLU_045161_0_0_1"/>
<dbReference type="InParanoid" id="B2GUZ5"/>
<dbReference type="OrthoDB" id="17206at9989"/>
<dbReference type="Reactome" id="R-RNO-2132295">
    <property type="pathway name" value="MHC class II antigen presentation"/>
</dbReference>
<dbReference type="Reactome" id="R-RNO-3371497">
    <property type="pathway name" value="HSP90 chaperone cycle for steroid hormone receptors (SHR) in the presence of ligand"/>
</dbReference>
<dbReference type="Reactome" id="R-RNO-6807878">
    <property type="pathway name" value="COPI-mediated anterograde transport"/>
</dbReference>
<dbReference type="Reactome" id="R-RNO-6811436">
    <property type="pathway name" value="COPI-independent Golgi-to-ER retrograde traffic"/>
</dbReference>
<dbReference type="Reactome" id="R-RNO-879415">
    <property type="pathway name" value="Advanced glycosylation endproduct receptor signaling"/>
</dbReference>
<dbReference type="Reactome" id="R-RNO-983231">
    <property type="pathway name" value="Factors involved in megakaryocyte development and platelet production"/>
</dbReference>
<dbReference type="PRO" id="PR:B2GUZ5"/>
<dbReference type="Proteomes" id="UP000002494">
    <property type="component" value="Chromosome 2"/>
</dbReference>
<dbReference type="Bgee" id="ENSRNOG00000013538">
    <property type="expression patterns" value="Expressed in thymus and 19 other cell types or tissues"/>
</dbReference>
<dbReference type="GO" id="GO:0005903">
    <property type="term" value="C:brush border"/>
    <property type="evidence" value="ECO:0000266"/>
    <property type="project" value="RGD"/>
</dbReference>
<dbReference type="GO" id="GO:0005911">
    <property type="term" value="C:cell-cell junction"/>
    <property type="evidence" value="ECO:0000266"/>
    <property type="project" value="RGD"/>
</dbReference>
<dbReference type="GO" id="GO:0030863">
    <property type="term" value="C:cortical cytoskeleton"/>
    <property type="evidence" value="ECO:0000266"/>
    <property type="project" value="RGD"/>
</dbReference>
<dbReference type="GO" id="GO:0008290">
    <property type="term" value="C:F-actin capping protein complex"/>
    <property type="evidence" value="ECO:0000266"/>
    <property type="project" value="RGD"/>
</dbReference>
<dbReference type="GO" id="GO:0016020">
    <property type="term" value="C:membrane"/>
    <property type="evidence" value="ECO:0000266"/>
    <property type="project" value="RGD"/>
</dbReference>
<dbReference type="GO" id="GO:0071203">
    <property type="term" value="C:WASH complex"/>
    <property type="evidence" value="ECO:0000250"/>
    <property type="project" value="UniProtKB"/>
</dbReference>
<dbReference type="GO" id="GO:0051015">
    <property type="term" value="F:actin filament binding"/>
    <property type="evidence" value="ECO:0000318"/>
    <property type="project" value="GO_Central"/>
</dbReference>
<dbReference type="GO" id="GO:0030036">
    <property type="term" value="P:actin cytoskeleton organization"/>
    <property type="evidence" value="ECO:0000318"/>
    <property type="project" value="GO_Central"/>
</dbReference>
<dbReference type="GO" id="GO:0051016">
    <property type="term" value="P:barbed-end actin filament capping"/>
    <property type="evidence" value="ECO:0000266"/>
    <property type="project" value="RGD"/>
</dbReference>
<dbReference type="GO" id="GO:0034329">
    <property type="term" value="P:cell junction assembly"/>
    <property type="evidence" value="ECO:0000250"/>
    <property type="project" value="UniProtKB"/>
</dbReference>
<dbReference type="FunFam" id="3.30.1140.60:FF:000001">
    <property type="entry name" value="F-actin-capping protein subunit alpha"/>
    <property type="match status" value="1"/>
</dbReference>
<dbReference type="FunFam" id="3.90.1150.210:FF:000002">
    <property type="entry name" value="F-actin-capping protein subunit alpha"/>
    <property type="match status" value="1"/>
</dbReference>
<dbReference type="Gene3D" id="3.30.1140.60">
    <property type="entry name" value="F-actin capping protein, alpha subunit"/>
    <property type="match status" value="1"/>
</dbReference>
<dbReference type="Gene3D" id="3.90.1150.210">
    <property type="entry name" value="F-actin capping protein, beta subunit"/>
    <property type="match status" value="1"/>
</dbReference>
<dbReference type="InterPro" id="IPR002189">
    <property type="entry name" value="CapZ_alpha"/>
</dbReference>
<dbReference type="InterPro" id="IPR037282">
    <property type="entry name" value="CapZ_alpha/beta"/>
</dbReference>
<dbReference type="InterPro" id="IPR042276">
    <property type="entry name" value="CapZ_alpha/beta_2"/>
</dbReference>
<dbReference type="InterPro" id="IPR042489">
    <property type="entry name" value="CapZ_alpha_1"/>
</dbReference>
<dbReference type="InterPro" id="IPR017865">
    <property type="entry name" value="F-actin_cap_asu_CS"/>
</dbReference>
<dbReference type="PANTHER" id="PTHR10653">
    <property type="entry name" value="F-ACTIN-CAPPING PROTEIN SUBUNIT ALPHA"/>
    <property type="match status" value="1"/>
</dbReference>
<dbReference type="PANTHER" id="PTHR10653:SF5">
    <property type="entry name" value="F-ACTIN-CAPPING PROTEIN SUBUNIT ALPHA-1"/>
    <property type="match status" value="1"/>
</dbReference>
<dbReference type="Pfam" id="PF01267">
    <property type="entry name" value="F-actin_cap_A"/>
    <property type="match status" value="1"/>
</dbReference>
<dbReference type="PRINTS" id="PR00191">
    <property type="entry name" value="FACTINCAPA"/>
</dbReference>
<dbReference type="SUPFAM" id="SSF90096">
    <property type="entry name" value="Subunits of heterodimeric actin filament capping protein Capz"/>
    <property type="match status" value="1"/>
</dbReference>
<dbReference type="PROSITE" id="PS00748">
    <property type="entry name" value="F_ACTIN_CAPPING_A_1"/>
    <property type="match status" value="1"/>
</dbReference>
<dbReference type="PROSITE" id="PS00749">
    <property type="entry name" value="F_ACTIN_CAPPING_A_2"/>
    <property type="match status" value="1"/>
</dbReference>
<gene>
    <name evidence="2" type="primary">Capza1</name>
</gene>
<protein>
    <recommendedName>
        <fullName evidence="2">F-actin-capping protein subunit alpha-1</fullName>
    </recommendedName>
    <alternativeName>
        <fullName evidence="2">CapZ alpha-1</fullName>
    </alternativeName>
</protein>
<keyword id="KW-0007">Acetylation</keyword>
<keyword id="KW-0117">Actin capping</keyword>
<keyword id="KW-0009">Actin-binding</keyword>
<keyword id="KW-0963">Cytoplasm</keyword>
<keyword id="KW-0206">Cytoskeleton</keyword>
<keyword id="KW-0597">Phosphoprotein</keyword>
<keyword id="KW-1185">Reference proteome</keyword>
<comment type="function">
    <text evidence="1 2">F-actin-capping proteins bind in a Ca(2+)-independent manner to the fast growing ends of actin filaments (barbed end) thereby blocking the exchange of subunits at these ends. Unlike other capping proteins (such as gelsolin and severin), these proteins do not sever actin filaments. May play a role in the formation of epithelial cell junctions (By similarity). Forms, with CAPZB, the barbed end of the fast growing ends of actin filaments in the dynactin complex and stabilizes dynactin structure. The dynactin multiprotein complex activates the molecular motor dynein for ultra-processive transport along microtubules (By similarity).</text>
</comment>
<comment type="subunit">
    <text evidence="1 2 5">Component of the F-actin capping complex, composed of a heterodimer of an alpha and a beta subunit. Subunit of dynactin, a multiprotein complex part of a tripartite complex with dynein and a adapter, such as BICDL1, BICD2 or HOOK3. The dynactin complex is built around ACTR1A/ACTB filament and consists of an actin-related filament composed of a shoulder domain, a pointed end and a barbed end. Its length is defined by its flexible shoulder domain. The soulder is composed of 2 DCTN1 subunits, 4 DCTN2 and 2 DCTN3. The 4 DCNT2 (via N-terminus) bind the ACTR1A filament and act as molecular rulers to determine the length. The pointed end is important for binding dynein-dynactin cargo adapters. Consists of 4 subunits: ACTR10, DCNT4, DCTN5 and DCTN6. The barbed end is composed of a CAPZA1:CAPZB heterodimers, which binds ACTR1A/ACTB filament and dynactin and stabilizes dynactin (By similarity). Component of the WASH complex, composed of F-actin-capping protein subunit alpha (CAPZA1, CAPZA2 or CAPZA3), F-actin-capping protein subunit beta (CAPZB), WASHC1, WASHC2, WASHC3, WASHC4 and WASHC5. Interacts with S100B (By similarity). Interacts with S100A1. Interacts with SH3BP1; recruits CAPZA1 to forming cell junctions. Interacts with CD2AP (By similarity). Directly interacts with CRACD; this interaction decreases binding to actin (By similarity).</text>
</comment>
<comment type="subcellular location">
    <subcellularLocation>
        <location evidence="4">Cytoplasm</location>
        <location evidence="4">Cytoskeleton</location>
    </subcellularLocation>
</comment>
<comment type="similarity">
    <text evidence="3">Belongs to the F-actin-capping protein alpha subunit family.</text>
</comment>
<sequence length="286" mass="32910">MADFEDRVSDEEKVRIAAKFITHAPPGEFNEVFNDVRLLLNNDNLLREGAAHAFAQYNMDQFTPVKIEGYDDQVLITEHGDLGNSRFLDPRNKISFKFDHLRKEASDPQPEDVDGGLKSWRDSCDSALRAYVKDHYSNGFCTVYAKTIDGQQTIIACIESHQFQPKNFWNGRWRSEWKFTITPPTAQVVGVLKIQVHYYEDGNVQLVSHKDVQDSVTVSNEVQTAKEFIKIIESAENEYQTAISENYQTMSDTTFKALRRQLPVTRTKIDWNKILSYKIGKEMQNA</sequence>
<reference evidence="6" key="1">
    <citation type="journal article" date="2004" name="Genome Res.">
        <title>The status, quality, and expansion of the NIH full-length cDNA project: the Mammalian Gene Collection (MGC).</title>
        <authorList>
            <consortium name="The MGC Project Team"/>
        </authorList>
    </citation>
    <scope>NUCLEOTIDE SEQUENCE [LARGE SCALE MRNA]</scope>
    <source>
        <strain>Brown Norway</strain>
        <tissue evidence="6">Embryonic lung</tissue>
    </source>
</reference>
<reference key="2">
    <citation type="journal article" date="2009" name="Proteomics">
        <title>Proteome profile of the mature rat olfactory bulb.</title>
        <authorList>
            <person name="Maurya D.K."/>
            <person name="Sundaram C.S."/>
            <person name="Bhargava P."/>
        </authorList>
    </citation>
    <scope>IDENTIFICATION BY MASS SPECTROMETRY</scope>
    <scope>SUBCELLULAR LOCATION</scope>
</reference>
<reference key="3">
    <citation type="journal article" date="2012" name="Nat. Commun.">
        <title>Quantitative maps of protein phosphorylation sites across 14 different rat organs and tissues.</title>
        <authorList>
            <person name="Lundby A."/>
            <person name="Secher A."/>
            <person name="Lage K."/>
            <person name="Nordsborg N.B."/>
            <person name="Dmytriyev A."/>
            <person name="Lundby C."/>
            <person name="Olsen J.V."/>
        </authorList>
    </citation>
    <scope>PHOSPHORYLATION [LARGE SCALE ANALYSIS] AT SER-9</scope>
    <scope>IDENTIFICATION BY MASS SPECTROMETRY [LARGE SCALE ANALYSIS]</scope>
</reference>
<reference key="4">
    <citation type="journal article" date="2009" name="J. Mol. Biol.">
        <title>Solution structure of S100A1 bound to the CapZ peptide (TRTK12).</title>
        <authorList>
            <person name="Wright N.T."/>
            <person name="Cannon B.R."/>
            <person name="Wilder P.T."/>
            <person name="Morgan M.T."/>
            <person name="Varney K.M."/>
            <person name="Zimmer D.B."/>
            <person name="Weber D.J."/>
        </authorList>
    </citation>
    <scope>STRUCTURE BY NMR OF 265-276 IN COMPLEX WITH S100A1</scope>
    <scope>SUBUNIT</scope>
</reference>
<feature type="initiator methionine" description="Removed" evidence="2">
    <location>
        <position position="1"/>
    </location>
</feature>
<feature type="chain" id="PRO_0000349121" description="F-actin-capping protein subunit alpha-1" evidence="2">
    <location>
        <begin position="2"/>
        <end position="286"/>
    </location>
</feature>
<feature type="modified residue" description="N-acetylalanine" evidence="2">
    <location>
        <position position="2"/>
    </location>
</feature>
<feature type="modified residue" description="Phosphoserine" evidence="7">
    <location>
        <position position="9"/>
    </location>
</feature>
<feature type="modified residue" description="N6-acetyllysine" evidence="2">
    <location>
        <position position="19"/>
    </location>
</feature>
<feature type="modified residue" description="N6-acetyllysine" evidence="2">
    <location>
        <position position="97"/>
    </location>
</feature>